<name>FTSL_STAA8</name>
<proteinExistence type="inferred from homology"/>
<keyword id="KW-0131">Cell cycle</keyword>
<keyword id="KW-0132">Cell division</keyword>
<keyword id="KW-1003">Cell membrane</keyword>
<keyword id="KW-0472">Membrane</keyword>
<keyword id="KW-1185">Reference proteome</keyword>
<keyword id="KW-0812">Transmembrane</keyword>
<keyword id="KW-1133">Transmembrane helix</keyword>
<accession>Q2FZ95</accession>
<gene>
    <name evidence="1" type="primary">ftsL</name>
    <name type="ordered locus">SAOUHSC_01144</name>
</gene>
<evidence type="ECO:0000255" key="1">
    <source>
        <dbReference type="HAMAP-Rule" id="MF_00910"/>
    </source>
</evidence>
<comment type="function">
    <text evidence="1">Essential cell division protein.</text>
</comment>
<comment type="subcellular location">
    <subcellularLocation>
        <location evidence="1">Cell membrane</location>
        <topology evidence="1">Single-pass type II membrane protein</topology>
    </subcellularLocation>
    <text evidence="1">Localizes to the division septum where it forms a ring structure.</text>
</comment>
<comment type="similarity">
    <text evidence="1">Belongs to the FtsL family.</text>
</comment>
<feature type="chain" id="PRO_0000414570" description="Cell division protein FtsL">
    <location>
        <begin position="1"/>
        <end position="133"/>
    </location>
</feature>
<feature type="topological domain" description="Cytoplasmic" evidence="1">
    <location>
        <begin position="1"/>
        <end position="45"/>
    </location>
</feature>
<feature type="transmembrane region" description="Helical" evidence="1">
    <location>
        <begin position="46"/>
        <end position="65"/>
    </location>
</feature>
<feature type="topological domain" description="Extracellular" evidence="1">
    <location>
        <begin position="66"/>
        <end position="133"/>
    </location>
</feature>
<organism>
    <name type="scientific">Staphylococcus aureus (strain NCTC 8325 / PS 47)</name>
    <dbReference type="NCBI Taxonomy" id="93061"/>
    <lineage>
        <taxon>Bacteria</taxon>
        <taxon>Bacillati</taxon>
        <taxon>Bacillota</taxon>
        <taxon>Bacilli</taxon>
        <taxon>Bacillales</taxon>
        <taxon>Staphylococcaceae</taxon>
        <taxon>Staphylococcus</taxon>
    </lineage>
</organism>
<sequence>MAVEKVYQPYDEQVYNSIPKQQPQTKPEKKTVSRKVVVQLTKFEKVLYITLITVIAMLSIYMLSLKMDAYDTRGKIADLDYKIDKQSSENSALQSEIKKNSSYERIYEKAKKQGMSLENDNVKVVRSNGEAKN</sequence>
<protein>
    <recommendedName>
        <fullName evidence="1">Cell division protein FtsL</fullName>
    </recommendedName>
</protein>
<reference key="1">
    <citation type="book" date="2006" name="Gram positive pathogens, 2nd edition">
        <title>The Staphylococcus aureus NCTC 8325 genome.</title>
        <editorList>
            <person name="Fischetti V."/>
            <person name="Novick R."/>
            <person name="Ferretti J."/>
            <person name="Portnoy D."/>
            <person name="Rood J."/>
        </editorList>
        <authorList>
            <person name="Gillaspy A.F."/>
            <person name="Worrell V."/>
            <person name="Orvis J."/>
            <person name="Roe B.A."/>
            <person name="Dyer D.W."/>
            <person name="Iandolo J.J."/>
        </authorList>
    </citation>
    <scope>NUCLEOTIDE SEQUENCE [LARGE SCALE GENOMIC DNA]</scope>
    <source>
        <strain>NCTC 8325 / PS 47</strain>
    </source>
</reference>
<dbReference type="EMBL" id="CP000253">
    <property type="protein sequence ID" value="ABD30254.1"/>
    <property type="molecule type" value="Genomic_DNA"/>
</dbReference>
<dbReference type="RefSeq" id="WP_000257598.1">
    <property type="nucleotide sequence ID" value="NZ_LS483365.1"/>
</dbReference>
<dbReference type="RefSeq" id="YP_499686.1">
    <property type="nucleotide sequence ID" value="NC_007795.1"/>
</dbReference>
<dbReference type="SMR" id="Q2FZ95"/>
<dbReference type="STRING" id="93061.SAOUHSC_01144"/>
<dbReference type="PaxDb" id="1280-SAXN108_1178"/>
<dbReference type="GeneID" id="3920704"/>
<dbReference type="GeneID" id="98345496"/>
<dbReference type="KEGG" id="sao:SAOUHSC_01144"/>
<dbReference type="eggNOG" id="COG4839">
    <property type="taxonomic scope" value="Bacteria"/>
</dbReference>
<dbReference type="HOGENOM" id="CLU_157825_1_1_9"/>
<dbReference type="OrthoDB" id="14664at2"/>
<dbReference type="PRO" id="PR:Q2FZ95"/>
<dbReference type="Proteomes" id="UP000008816">
    <property type="component" value="Chromosome"/>
</dbReference>
<dbReference type="GO" id="GO:0032153">
    <property type="term" value="C:cell division site"/>
    <property type="evidence" value="ECO:0007669"/>
    <property type="project" value="UniProtKB-UniRule"/>
</dbReference>
<dbReference type="GO" id="GO:0005886">
    <property type="term" value="C:plasma membrane"/>
    <property type="evidence" value="ECO:0007669"/>
    <property type="project" value="UniProtKB-SubCell"/>
</dbReference>
<dbReference type="GO" id="GO:0043093">
    <property type="term" value="P:FtsZ-dependent cytokinesis"/>
    <property type="evidence" value="ECO:0007669"/>
    <property type="project" value="UniProtKB-UniRule"/>
</dbReference>
<dbReference type="HAMAP" id="MF_00910">
    <property type="entry name" value="FtsL"/>
    <property type="match status" value="1"/>
</dbReference>
<dbReference type="InterPro" id="IPR011922">
    <property type="entry name" value="Cell_div_FtsL"/>
</dbReference>
<dbReference type="InterPro" id="IPR007060">
    <property type="entry name" value="FtsL/DivIC"/>
</dbReference>
<dbReference type="NCBIfam" id="TIGR02209">
    <property type="entry name" value="ftsL_broad"/>
    <property type="match status" value="1"/>
</dbReference>
<dbReference type="Pfam" id="PF04977">
    <property type="entry name" value="DivIC"/>
    <property type="match status" value="1"/>
</dbReference>